<proteinExistence type="inferred from homology"/>
<accession>P67201</accession>
<accession>Q99TT3</accession>
<dbReference type="EC" id="2.7.11.32" evidence="1"/>
<dbReference type="EC" id="2.7.4.27" evidence="1"/>
<dbReference type="EMBL" id="BA000033">
    <property type="protein sequence ID" value="BAB95380.1"/>
    <property type="molecule type" value="Genomic_DNA"/>
</dbReference>
<dbReference type="RefSeq" id="WP_000411298.1">
    <property type="nucleotide sequence ID" value="NC_003923.1"/>
</dbReference>
<dbReference type="SMR" id="P67201"/>
<dbReference type="KEGG" id="sam:MW1515"/>
<dbReference type="HOGENOM" id="CLU_046206_2_1_9"/>
<dbReference type="GO" id="GO:0043531">
    <property type="term" value="F:ADP binding"/>
    <property type="evidence" value="ECO:0007669"/>
    <property type="project" value="UniProtKB-UniRule"/>
</dbReference>
<dbReference type="GO" id="GO:0005524">
    <property type="term" value="F:ATP binding"/>
    <property type="evidence" value="ECO:0007669"/>
    <property type="project" value="InterPro"/>
</dbReference>
<dbReference type="GO" id="GO:0016776">
    <property type="term" value="F:phosphotransferase activity, phosphate group as acceptor"/>
    <property type="evidence" value="ECO:0007669"/>
    <property type="project" value="UniProtKB-UniRule"/>
</dbReference>
<dbReference type="GO" id="GO:0004674">
    <property type="term" value="F:protein serine/threonine kinase activity"/>
    <property type="evidence" value="ECO:0007669"/>
    <property type="project" value="UniProtKB-UniRule"/>
</dbReference>
<dbReference type="HAMAP" id="MF_00921">
    <property type="entry name" value="PDRP"/>
    <property type="match status" value="1"/>
</dbReference>
<dbReference type="InterPro" id="IPR005177">
    <property type="entry name" value="Kinase-pyrophosphorylase"/>
</dbReference>
<dbReference type="InterPro" id="IPR026565">
    <property type="entry name" value="PPDK_reg"/>
</dbReference>
<dbReference type="NCBIfam" id="NF003742">
    <property type="entry name" value="PRK05339.1"/>
    <property type="match status" value="1"/>
</dbReference>
<dbReference type="PANTHER" id="PTHR31756">
    <property type="entry name" value="PYRUVATE, PHOSPHATE DIKINASE REGULATORY PROTEIN 1, CHLOROPLASTIC"/>
    <property type="match status" value="1"/>
</dbReference>
<dbReference type="PANTHER" id="PTHR31756:SF3">
    <property type="entry name" value="PYRUVATE, PHOSPHATE DIKINASE REGULATORY PROTEIN 1, CHLOROPLASTIC"/>
    <property type="match status" value="1"/>
</dbReference>
<dbReference type="Pfam" id="PF03618">
    <property type="entry name" value="Kinase-PPPase"/>
    <property type="match status" value="1"/>
</dbReference>
<sequence length="272" mass="30785">MEKIKIIVASDSIGETAELVARAGISQFNPKQCKNELLRYPYIESFEDVDEVIQVAKDTNAIIVYTLIKPEMKQYMSEKVAEFQLKSVDIMGPLMDLLSASVEEKPYNEPGIVHRLDDAYFKKIDAIEFAVKYDDGKDPKGLPKADIVLLGISRTSKTPLSQYLAHKSYKVMNVPIVPEVTPPDGLYDIDPKKCIALKISEEKLNRIRKERLKQLGLGDTARYATEARIQEELNYFEEIVSEIGCPVIDVSQKAIEETANDIIHYIEQNKSK</sequence>
<organism>
    <name type="scientific">Staphylococcus aureus (strain MW2)</name>
    <dbReference type="NCBI Taxonomy" id="196620"/>
    <lineage>
        <taxon>Bacteria</taxon>
        <taxon>Bacillati</taxon>
        <taxon>Bacillota</taxon>
        <taxon>Bacilli</taxon>
        <taxon>Bacillales</taxon>
        <taxon>Staphylococcaceae</taxon>
        <taxon>Staphylococcus</taxon>
    </lineage>
</organism>
<keyword id="KW-0418">Kinase</keyword>
<keyword id="KW-0547">Nucleotide-binding</keyword>
<keyword id="KW-0723">Serine/threonine-protein kinase</keyword>
<keyword id="KW-0808">Transferase</keyword>
<gene>
    <name type="ordered locus">MW1515</name>
</gene>
<reference key="1">
    <citation type="journal article" date="2002" name="Lancet">
        <title>Genome and virulence determinants of high virulence community-acquired MRSA.</title>
        <authorList>
            <person name="Baba T."/>
            <person name="Takeuchi F."/>
            <person name="Kuroda M."/>
            <person name="Yuzawa H."/>
            <person name="Aoki K."/>
            <person name="Oguchi A."/>
            <person name="Nagai Y."/>
            <person name="Iwama N."/>
            <person name="Asano K."/>
            <person name="Naimi T."/>
            <person name="Kuroda H."/>
            <person name="Cui L."/>
            <person name="Yamamoto K."/>
            <person name="Hiramatsu K."/>
        </authorList>
    </citation>
    <scope>NUCLEOTIDE SEQUENCE [LARGE SCALE GENOMIC DNA]</scope>
    <source>
        <strain>MW2</strain>
    </source>
</reference>
<comment type="function">
    <text evidence="1">Bifunctional serine/threonine kinase and phosphorylase involved in the regulation of the pyruvate, phosphate dikinase (PPDK) by catalyzing its phosphorylation/dephosphorylation.</text>
</comment>
<comment type="catalytic activity">
    <reaction evidence="1">
        <text>N(tele)-phospho-L-histidyl/L-threonyl-[pyruvate, phosphate dikinase] + ADP = N(tele)-phospho-L-histidyl/O-phospho-L-threonyl-[pyruvate, phosphate dikinase] + AMP + H(+)</text>
        <dbReference type="Rhea" id="RHEA:43692"/>
        <dbReference type="Rhea" id="RHEA-COMP:10650"/>
        <dbReference type="Rhea" id="RHEA-COMP:10651"/>
        <dbReference type="ChEBI" id="CHEBI:15378"/>
        <dbReference type="ChEBI" id="CHEBI:30013"/>
        <dbReference type="ChEBI" id="CHEBI:61977"/>
        <dbReference type="ChEBI" id="CHEBI:83586"/>
        <dbReference type="ChEBI" id="CHEBI:456215"/>
        <dbReference type="ChEBI" id="CHEBI:456216"/>
        <dbReference type="EC" id="2.7.11.32"/>
    </reaction>
</comment>
<comment type="catalytic activity">
    <reaction evidence="1">
        <text>N(tele)-phospho-L-histidyl/O-phospho-L-threonyl-[pyruvate, phosphate dikinase] + phosphate + H(+) = N(tele)-phospho-L-histidyl/L-threonyl-[pyruvate, phosphate dikinase] + diphosphate</text>
        <dbReference type="Rhea" id="RHEA:43696"/>
        <dbReference type="Rhea" id="RHEA-COMP:10650"/>
        <dbReference type="Rhea" id="RHEA-COMP:10651"/>
        <dbReference type="ChEBI" id="CHEBI:15378"/>
        <dbReference type="ChEBI" id="CHEBI:30013"/>
        <dbReference type="ChEBI" id="CHEBI:33019"/>
        <dbReference type="ChEBI" id="CHEBI:43474"/>
        <dbReference type="ChEBI" id="CHEBI:61977"/>
        <dbReference type="ChEBI" id="CHEBI:83586"/>
        <dbReference type="EC" id="2.7.4.27"/>
    </reaction>
</comment>
<comment type="similarity">
    <text evidence="1">Belongs to the pyruvate, phosphate/water dikinase regulatory protein family. PDRP subfamily.</text>
</comment>
<protein>
    <recommendedName>
        <fullName evidence="1">Putative pyruvate, phosphate dikinase regulatory protein</fullName>
        <shortName evidence="1">PPDK regulatory protein</shortName>
        <ecNumber evidence="1">2.7.11.32</ecNumber>
        <ecNumber evidence="1">2.7.4.27</ecNumber>
    </recommendedName>
</protein>
<evidence type="ECO:0000255" key="1">
    <source>
        <dbReference type="HAMAP-Rule" id="MF_00921"/>
    </source>
</evidence>
<name>PDRP_STAAW</name>
<feature type="chain" id="PRO_0000196719" description="Putative pyruvate, phosphate dikinase regulatory protein">
    <location>
        <begin position="1"/>
        <end position="272"/>
    </location>
</feature>
<feature type="binding site" evidence="1">
    <location>
        <begin position="151"/>
        <end position="158"/>
    </location>
    <ligand>
        <name>ADP</name>
        <dbReference type="ChEBI" id="CHEBI:456216"/>
    </ligand>
</feature>